<sequence length="629" mass="68868">MPSTRNIETHNDSNPTLRALSLSALGIVYGDIGTSPLYTFKTVILLAGGGTPAVNTIMGSVSLIIWTLIIIASVKYIHFALRIDNDGEGGILALMSLLSLKLKQRPFIIAVGLMGAALIYGDGTITPAISVLSAVEGLEILSPSLKYYVLPIAITILITLFAIQSKGTATIGKAFGPVMAFWFLTIGILGARGVIQHPSVLAAINPIYGLSFLFSNGATGFFILCGVFLCVTGAEALYADLGHFGTAPIRCAWFGLAFPSLIFNYLGQAALVLEGASTEHNIFYMLCPGDFLLPLIILSTVATIIASQAIITGAFSMTRQAMQLGWLPRLRVTQTSSEGYGQIYIGVVNWLLMLATLGLTIGFGSSEKLAAAYGIAVSATMLCTTLLLFIALHKLWKWDIITSGLVAGLFMIVDASFFAANLTKFINGGYIPITLAIIIYSMMYIWHKGYQTIAIKQKEKNITVASFLDSIQKERVVRVPKTAVFLTSKEQDIPPILVWHVKKNHVLQDKVIILKINNLSIPRCKPGDRLQIVETGTGIWHAVANYGFMEQPHIPKLLKKLEAQGYDINIKDITYYIGHETIFVRNVRHTLSKYIKILFVFMHRNALPMSNYFHLPPESVFEIGRQIEI</sequence>
<feature type="chain" id="PRO_0000209034" description="Probable potassium transport system protein Kup 3">
    <location>
        <begin position="1"/>
        <end position="629"/>
    </location>
</feature>
<feature type="transmembrane region" description="Helical" evidence="1">
    <location>
        <begin position="20"/>
        <end position="40"/>
    </location>
</feature>
<feature type="transmembrane region" description="Helical" evidence="1">
    <location>
        <begin position="61"/>
        <end position="81"/>
    </location>
</feature>
<feature type="transmembrane region" description="Helical" evidence="1">
    <location>
        <begin position="106"/>
        <end position="126"/>
    </location>
</feature>
<feature type="transmembrane region" description="Helical" evidence="1">
    <location>
        <begin position="143"/>
        <end position="163"/>
    </location>
</feature>
<feature type="transmembrane region" description="Helical" evidence="1">
    <location>
        <begin position="171"/>
        <end position="191"/>
    </location>
</feature>
<feature type="transmembrane region" description="Helical" evidence="1">
    <location>
        <begin position="209"/>
        <end position="229"/>
    </location>
</feature>
<feature type="transmembrane region" description="Helical" evidence="1">
    <location>
        <begin position="253"/>
        <end position="273"/>
    </location>
</feature>
<feature type="transmembrane region" description="Helical" evidence="1">
    <location>
        <begin position="291"/>
        <end position="311"/>
    </location>
</feature>
<feature type="transmembrane region" description="Helical" evidence="1">
    <location>
        <begin position="343"/>
        <end position="363"/>
    </location>
</feature>
<feature type="transmembrane region" description="Helical" evidence="1">
    <location>
        <begin position="372"/>
        <end position="392"/>
    </location>
</feature>
<feature type="transmembrane region" description="Helical" evidence="1">
    <location>
        <begin position="400"/>
        <end position="420"/>
    </location>
</feature>
<feature type="transmembrane region" description="Helical" evidence="1">
    <location>
        <begin position="425"/>
        <end position="445"/>
    </location>
</feature>
<proteinExistence type="inferred from homology"/>
<accession>Q5ZSY2</accession>
<reference key="1">
    <citation type="journal article" date="2004" name="Science">
        <title>The genomic sequence of the accidental pathogen Legionella pneumophila.</title>
        <authorList>
            <person name="Chien M."/>
            <person name="Morozova I."/>
            <person name="Shi S."/>
            <person name="Sheng H."/>
            <person name="Chen J."/>
            <person name="Gomez S.M."/>
            <person name="Asamani G."/>
            <person name="Hill K."/>
            <person name="Nuara J."/>
            <person name="Feder M."/>
            <person name="Rineer J."/>
            <person name="Greenberg J.J."/>
            <person name="Steshenko V."/>
            <person name="Park S.H."/>
            <person name="Zhao B."/>
            <person name="Teplitskaya E."/>
            <person name="Edwards J.R."/>
            <person name="Pampou S."/>
            <person name="Georghiou A."/>
            <person name="Chou I.-C."/>
            <person name="Iannuccilli W."/>
            <person name="Ulz M.E."/>
            <person name="Kim D.H."/>
            <person name="Geringer-Sameth A."/>
            <person name="Goldsberry C."/>
            <person name="Morozov P."/>
            <person name="Fischer S.G."/>
            <person name="Segal G."/>
            <person name="Qu X."/>
            <person name="Rzhetsky A."/>
            <person name="Zhang P."/>
            <person name="Cayanis E."/>
            <person name="De Jong P.J."/>
            <person name="Ju J."/>
            <person name="Kalachikov S."/>
            <person name="Shuman H.A."/>
            <person name="Russo J.J."/>
        </authorList>
    </citation>
    <scope>NUCLEOTIDE SEQUENCE [LARGE SCALE GENOMIC DNA]</scope>
    <source>
        <strain>Philadelphia 1 / ATCC 33152 / DSM 7513</strain>
    </source>
</reference>
<protein>
    <recommendedName>
        <fullName evidence="1">Probable potassium transport system protein Kup 3</fullName>
    </recommendedName>
</protein>
<name>KUP3_LEGPH</name>
<dbReference type="EMBL" id="AE017354">
    <property type="protein sequence ID" value="AAU28445.1"/>
    <property type="status" value="ALT_INIT"/>
    <property type="molecule type" value="Genomic_DNA"/>
</dbReference>
<dbReference type="RefSeq" id="WP_016357009.1">
    <property type="nucleotide sequence ID" value="NC_002942.5"/>
</dbReference>
<dbReference type="RefSeq" id="YP_096392.1">
    <property type="nucleotide sequence ID" value="NC_002942.5"/>
</dbReference>
<dbReference type="STRING" id="272624.lpg2384"/>
<dbReference type="PaxDb" id="272624-lpg2384"/>
<dbReference type="KEGG" id="lpn:lpg2384"/>
<dbReference type="PATRIC" id="fig|272624.6.peg.2516"/>
<dbReference type="eggNOG" id="COG3158">
    <property type="taxonomic scope" value="Bacteria"/>
</dbReference>
<dbReference type="HOGENOM" id="CLU_008142_4_2_6"/>
<dbReference type="OrthoDB" id="9805577at2"/>
<dbReference type="Proteomes" id="UP000000609">
    <property type="component" value="Chromosome"/>
</dbReference>
<dbReference type="GO" id="GO:0005886">
    <property type="term" value="C:plasma membrane"/>
    <property type="evidence" value="ECO:0007669"/>
    <property type="project" value="UniProtKB-SubCell"/>
</dbReference>
<dbReference type="GO" id="GO:0015079">
    <property type="term" value="F:potassium ion transmembrane transporter activity"/>
    <property type="evidence" value="ECO:0007669"/>
    <property type="project" value="UniProtKB-UniRule"/>
</dbReference>
<dbReference type="GO" id="GO:0015293">
    <property type="term" value="F:symporter activity"/>
    <property type="evidence" value="ECO:0007669"/>
    <property type="project" value="UniProtKB-UniRule"/>
</dbReference>
<dbReference type="HAMAP" id="MF_01522">
    <property type="entry name" value="Kup"/>
    <property type="match status" value="1"/>
</dbReference>
<dbReference type="InterPro" id="IPR003855">
    <property type="entry name" value="K+_transporter"/>
</dbReference>
<dbReference type="InterPro" id="IPR053952">
    <property type="entry name" value="K_trans_C"/>
</dbReference>
<dbReference type="InterPro" id="IPR053951">
    <property type="entry name" value="K_trans_N"/>
</dbReference>
<dbReference type="InterPro" id="IPR023051">
    <property type="entry name" value="Kup"/>
</dbReference>
<dbReference type="PANTHER" id="PTHR30540:SF83">
    <property type="entry name" value="K+ POTASSIUM TRANSPORTER"/>
    <property type="match status" value="1"/>
</dbReference>
<dbReference type="PANTHER" id="PTHR30540">
    <property type="entry name" value="OSMOTIC STRESS POTASSIUM TRANSPORTER"/>
    <property type="match status" value="1"/>
</dbReference>
<dbReference type="Pfam" id="PF02705">
    <property type="entry name" value="K_trans"/>
    <property type="match status" value="1"/>
</dbReference>
<dbReference type="Pfam" id="PF22776">
    <property type="entry name" value="K_trans_C"/>
    <property type="match status" value="1"/>
</dbReference>
<keyword id="KW-0997">Cell inner membrane</keyword>
<keyword id="KW-1003">Cell membrane</keyword>
<keyword id="KW-0406">Ion transport</keyword>
<keyword id="KW-0472">Membrane</keyword>
<keyword id="KW-0630">Potassium</keyword>
<keyword id="KW-0633">Potassium transport</keyword>
<keyword id="KW-1185">Reference proteome</keyword>
<keyword id="KW-0769">Symport</keyword>
<keyword id="KW-0812">Transmembrane</keyword>
<keyword id="KW-1133">Transmembrane helix</keyword>
<keyword id="KW-0813">Transport</keyword>
<evidence type="ECO:0000255" key="1">
    <source>
        <dbReference type="HAMAP-Rule" id="MF_01522"/>
    </source>
</evidence>
<evidence type="ECO:0000305" key="2"/>
<comment type="function">
    <text evidence="1">Transport of potassium into the cell. Likely operates as a K(+):H(+) symporter.</text>
</comment>
<comment type="catalytic activity">
    <reaction evidence="1">
        <text>K(+)(in) + H(+)(in) = K(+)(out) + H(+)(out)</text>
        <dbReference type="Rhea" id="RHEA:28490"/>
        <dbReference type="ChEBI" id="CHEBI:15378"/>
        <dbReference type="ChEBI" id="CHEBI:29103"/>
    </reaction>
    <physiologicalReaction direction="right-to-left" evidence="1">
        <dbReference type="Rhea" id="RHEA:28492"/>
    </physiologicalReaction>
</comment>
<comment type="subcellular location">
    <subcellularLocation>
        <location evidence="1">Cell inner membrane</location>
        <topology evidence="1">Multi-pass membrane protein</topology>
    </subcellularLocation>
</comment>
<comment type="similarity">
    <text evidence="1">Belongs to the HAK/KUP transporter (TC 2.A.72) family.</text>
</comment>
<comment type="sequence caution" evidence="2">
    <conflict type="erroneous initiation">
        <sequence resource="EMBL-CDS" id="AAU28445"/>
    </conflict>
</comment>
<gene>
    <name evidence="1" type="primary">kup3</name>
    <name type="ordered locus">lpg2384</name>
</gene>
<organism>
    <name type="scientific">Legionella pneumophila subsp. pneumophila (strain Philadelphia 1 / ATCC 33152 / DSM 7513)</name>
    <dbReference type="NCBI Taxonomy" id="272624"/>
    <lineage>
        <taxon>Bacteria</taxon>
        <taxon>Pseudomonadati</taxon>
        <taxon>Pseudomonadota</taxon>
        <taxon>Gammaproteobacteria</taxon>
        <taxon>Legionellales</taxon>
        <taxon>Legionellaceae</taxon>
        <taxon>Legionella</taxon>
    </lineage>
</organism>